<sequence length="159" mass="18062">MKIRILTIGQKMPAWVLTGFEDYFKRIQPFVQTQVIKLPMAKRGKNDSEADILKYCQIEGESILNALKPNETLIALEVGGRELSTEKLADTMKQWMLEGNDVALAIGGPDGLSDQVRKAAAWHWSLSKLTMPHPLVRILLIEQLYRAMSINHNHPYHRA</sequence>
<dbReference type="EC" id="2.1.1.177" evidence="1"/>
<dbReference type="EMBL" id="CU468230">
    <property type="protein sequence ID" value="CAP01671.1"/>
    <property type="molecule type" value="Genomic_DNA"/>
</dbReference>
<dbReference type="SMR" id="B0VSA3"/>
<dbReference type="KEGG" id="abm:ABSDF2358"/>
<dbReference type="HOGENOM" id="CLU_100552_1_0_6"/>
<dbReference type="Proteomes" id="UP000001741">
    <property type="component" value="Chromosome"/>
</dbReference>
<dbReference type="GO" id="GO:0005737">
    <property type="term" value="C:cytoplasm"/>
    <property type="evidence" value="ECO:0007669"/>
    <property type="project" value="UniProtKB-SubCell"/>
</dbReference>
<dbReference type="GO" id="GO:0070038">
    <property type="term" value="F:rRNA (pseudouridine-N3-)-methyltransferase activity"/>
    <property type="evidence" value="ECO:0007669"/>
    <property type="project" value="UniProtKB-UniRule"/>
</dbReference>
<dbReference type="CDD" id="cd18081">
    <property type="entry name" value="RlmH-like"/>
    <property type="match status" value="1"/>
</dbReference>
<dbReference type="Gene3D" id="3.40.1280.10">
    <property type="match status" value="1"/>
</dbReference>
<dbReference type="HAMAP" id="MF_00658">
    <property type="entry name" value="23SrRNA_methyltr_H"/>
    <property type="match status" value="1"/>
</dbReference>
<dbReference type="InterPro" id="IPR029028">
    <property type="entry name" value="Alpha/beta_knot_MTases"/>
</dbReference>
<dbReference type="InterPro" id="IPR003742">
    <property type="entry name" value="RlmH-like"/>
</dbReference>
<dbReference type="InterPro" id="IPR029026">
    <property type="entry name" value="tRNA_m1G_MTases_N"/>
</dbReference>
<dbReference type="NCBIfam" id="NF000986">
    <property type="entry name" value="PRK00103.1-4"/>
    <property type="match status" value="1"/>
</dbReference>
<dbReference type="NCBIfam" id="TIGR00246">
    <property type="entry name" value="tRNA_RlmH_YbeA"/>
    <property type="match status" value="1"/>
</dbReference>
<dbReference type="PANTHER" id="PTHR33603">
    <property type="entry name" value="METHYLTRANSFERASE"/>
    <property type="match status" value="1"/>
</dbReference>
<dbReference type="PANTHER" id="PTHR33603:SF1">
    <property type="entry name" value="RIBOSOMAL RNA LARGE SUBUNIT METHYLTRANSFERASE H"/>
    <property type="match status" value="1"/>
</dbReference>
<dbReference type="Pfam" id="PF02590">
    <property type="entry name" value="SPOUT_MTase"/>
    <property type="match status" value="1"/>
</dbReference>
<dbReference type="PIRSF" id="PIRSF004505">
    <property type="entry name" value="MT_bac"/>
    <property type="match status" value="1"/>
</dbReference>
<dbReference type="SUPFAM" id="SSF75217">
    <property type="entry name" value="alpha/beta knot"/>
    <property type="match status" value="1"/>
</dbReference>
<protein>
    <recommendedName>
        <fullName evidence="1">Ribosomal RNA large subunit methyltransferase H</fullName>
        <ecNumber evidence="1">2.1.1.177</ecNumber>
    </recommendedName>
    <alternativeName>
        <fullName evidence="1">23S rRNA (pseudouridine1915-N3)-methyltransferase</fullName>
    </alternativeName>
    <alternativeName>
        <fullName evidence="1">23S rRNA m3Psi1915 methyltransferase</fullName>
    </alternativeName>
    <alternativeName>
        <fullName evidence="1">rRNA (pseudouridine-N3-)-methyltransferase RlmH</fullName>
    </alternativeName>
</protein>
<keyword id="KW-0963">Cytoplasm</keyword>
<keyword id="KW-0489">Methyltransferase</keyword>
<keyword id="KW-0698">rRNA processing</keyword>
<keyword id="KW-0949">S-adenosyl-L-methionine</keyword>
<keyword id="KW-0808">Transferase</keyword>
<feature type="chain" id="PRO_0000366553" description="Ribosomal RNA large subunit methyltransferase H">
    <location>
        <begin position="1"/>
        <end position="159"/>
    </location>
</feature>
<feature type="binding site" evidence="1">
    <location>
        <position position="76"/>
    </location>
    <ligand>
        <name>S-adenosyl-L-methionine</name>
        <dbReference type="ChEBI" id="CHEBI:59789"/>
    </ligand>
</feature>
<feature type="binding site" evidence="1">
    <location>
        <position position="107"/>
    </location>
    <ligand>
        <name>S-adenosyl-L-methionine</name>
        <dbReference type="ChEBI" id="CHEBI:59789"/>
    </ligand>
</feature>
<feature type="binding site" evidence="1">
    <location>
        <begin position="126"/>
        <end position="131"/>
    </location>
    <ligand>
        <name>S-adenosyl-L-methionine</name>
        <dbReference type="ChEBI" id="CHEBI:59789"/>
    </ligand>
</feature>
<accession>B0VSA3</accession>
<gene>
    <name evidence="1" type="primary">rlmH</name>
    <name type="ordered locus">ABSDF2358</name>
</gene>
<evidence type="ECO:0000255" key="1">
    <source>
        <dbReference type="HAMAP-Rule" id="MF_00658"/>
    </source>
</evidence>
<proteinExistence type="inferred from homology"/>
<organism>
    <name type="scientific">Acinetobacter baumannii (strain SDF)</name>
    <dbReference type="NCBI Taxonomy" id="509170"/>
    <lineage>
        <taxon>Bacteria</taxon>
        <taxon>Pseudomonadati</taxon>
        <taxon>Pseudomonadota</taxon>
        <taxon>Gammaproteobacteria</taxon>
        <taxon>Moraxellales</taxon>
        <taxon>Moraxellaceae</taxon>
        <taxon>Acinetobacter</taxon>
        <taxon>Acinetobacter calcoaceticus/baumannii complex</taxon>
    </lineage>
</organism>
<comment type="function">
    <text evidence="1">Specifically methylates the pseudouridine at position 1915 (m3Psi1915) in 23S rRNA.</text>
</comment>
<comment type="catalytic activity">
    <reaction evidence="1">
        <text>pseudouridine(1915) in 23S rRNA + S-adenosyl-L-methionine = N(3)-methylpseudouridine(1915) in 23S rRNA + S-adenosyl-L-homocysteine + H(+)</text>
        <dbReference type="Rhea" id="RHEA:42752"/>
        <dbReference type="Rhea" id="RHEA-COMP:10221"/>
        <dbReference type="Rhea" id="RHEA-COMP:10222"/>
        <dbReference type="ChEBI" id="CHEBI:15378"/>
        <dbReference type="ChEBI" id="CHEBI:57856"/>
        <dbReference type="ChEBI" id="CHEBI:59789"/>
        <dbReference type="ChEBI" id="CHEBI:65314"/>
        <dbReference type="ChEBI" id="CHEBI:74486"/>
        <dbReference type="EC" id="2.1.1.177"/>
    </reaction>
</comment>
<comment type="subunit">
    <text evidence="1">Homodimer.</text>
</comment>
<comment type="subcellular location">
    <subcellularLocation>
        <location evidence="1">Cytoplasm</location>
    </subcellularLocation>
</comment>
<comment type="similarity">
    <text evidence="1">Belongs to the RNA methyltransferase RlmH family.</text>
</comment>
<reference key="1">
    <citation type="journal article" date="2008" name="PLoS ONE">
        <title>Comparative analysis of Acinetobacters: three genomes for three lifestyles.</title>
        <authorList>
            <person name="Vallenet D."/>
            <person name="Nordmann P."/>
            <person name="Barbe V."/>
            <person name="Poirel L."/>
            <person name="Mangenot S."/>
            <person name="Bataille E."/>
            <person name="Dossat C."/>
            <person name="Gas S."/>
            <person name="Kreimeyer A."/>
            <person name="Lenoble P."/>
            <person name="Oztas S."/>
            <person name="Poulain J."/>
            <person name="Segurens B."/>
            <person name="Robert C."/>
            <person name="Abergel C."/>
            <person name="Claverie J.-M."/>
            <person name="Raoult D."/>
            <person name="Medigue C."/>
            <person name="Weissenbach J."/>
            <person name="Cruveiller S."/>
        </authorList>
    </citation>
    <scope>NUCLEOTIDE SEQUENCE [LARGE SCALE GENOMIC DNA]</scope>
    <source>
        <strain>SDF</strain>
    </source>
</reference>
<name>RLMH_ACIBS</name>